<organism>
    <name type="scientific">Homo sapiens</name>
    <name type="common">Human</name>
    <dbReference type="NCBI Taxonomy" id="9606"/>
    <lineage>
        <taxon>Eukaryota</taxon>
        <taxon>Metazoa</taxon>
        <taxon>Chordata</taxon>
        <taxon>Craniata</taxon>
        <taxon>Vertebrata</taxon>
        <taxon>Euteleostomi</taxon>
        <taxon>Mammalia</taxon>
        <taxon>Eutheria</taxon>
        <taxon>Euarchontoglires</taxon>
        <taxon>Primates</taxon>
        <taxon>Haplorrhini</taxon>
        <taxon>Catarrhini</taxon>
        <taxon>Hominidae</taxon>
        <taxon>Homo</taxon>
    </lineage>
</organism>
<keyword id="KW-0002">3D-structure</keyword>
<keyword id="KW-0085">Behavior</keyword>
<keyword id="KW-1003">Cell membrane</keyword>
<keyword id="KW-0966">Cell projection</keyword>
<keyword id="KW-1015">Disulfide bond</keyword>
<keyword id="KW-0297">G-protein coupled receptor</keyword>
<keyword id="KW-0325">Glycoprotein</keyword>
<keyword id="KW-0472">Membrane</keyword>
<keyword id="KW-1267">Proteomics identification</keyword>
<keyword id="KW-0675">Receptor</keyword>
<keyword id="KW-1185">Reference proteome</keyword>
<keyword id="KW-0807">Transducer</keyword>
<keyword id="KW-0812">Transmembrane</keyword>
<keyword id="KW-1133">Transmembrane helix</keyword>
<proteinExistence type="evidence at protein level"/>
<comment type="function">
    <text evidence="7 11 12 13 14 15 16 18 19 21 22 23">G-protein coupled receptor for 5-hydroxytryptamine (serotonin) (PubMed:22957663, PubMed:3138543, PubMed:33762731, PubMed:37935376, PubMed:37935377, PubMed:8138923, PubMed:8393041). Also functions as a receptor for various drugs and psychoactive substances (PubMed:22957663, PubMed:3138543, PubMed:33762731, PubMed:38552625, PubMed:8138923, PubMed:8393041). Ligand binding causes a conformation change that triggers signaling via guanine nucleotide-binding proteins (G proteins) and modulates the activity of downstream effectors, such as adenylate cyclase (PubMed:22957663, PubMed:3138543, PubMed:33762731, PubMed:8138923, PubMed:8393041). HTR1A is coupled to G(i)/G(o) G alpha proteins and mediates inhibitory neurotransmission: signaling inhibits adenylate cyclase activity and activates a phosphatidylinositol-calcium second messenger system that regulates the release of Ca(2+) ions from intracellular stores (PubMed:33762731, PubMed:35610220). Beta-arrestin family members regulate signaling by mediating both receptor desensitization and resensitization processes (PubMed:18476671, PubMed:20363322, PubMed:20945968). Plays a role in the regulation of 5-hydroxytryptamine release and in the regulation of dopamine and 5-hydroxytryptamine metabolism (PubMed:18476671, PubMed:20363322, PubMed:20945968). Plays a role in the regulation of dopamine and 5-hydroxytryptamine levels in the brain, and thereby affects neural activity, mood and behavior (PubMed:18476671, PubMed:20363322, PubMed:20945968). Plays a role in the response to anxiogenic stimuli (PubMed:18476671, PubMed:20363322, PubMed:20945968).</text>
</comment>
<comment type="activity regulation">
    <text evidence="12 14 15 16">G-protein coupled receptor activity is regulated by lipids: phosphatidylinositol 4-phosphate increases HTR1A-mediated activity (PubMed:33762731). Binding to aripiprazol drug is regulated by cholesterol, which shapes the ligand-binding pocket, determining the specificity for aripiprazol (PubMed:33762731). Activated by IHCH-7179 small molecule: IHCH-7179 acts both as an agonist activator for HTR1A and as an antagonist inhibitor for HTR2A (PubMed:38552625). Activated by SEP-363856 small molecule: IHCH-7179 acts both as an agonist activator for HTR1A and TAAR1 (PubMed:37935376, PubMed:37935377).</text>
</comment>
<comment type="subunit">
    <text evidence="1 8 9">Heterodimer; heterodimerizes with GPER1 (PubMed:23300088). Interacts with YIF1B (By similarity). Interacts with GPR39 and GALR1 (PubMed:26365466).</text>
</comment>
<comment type="interaction">
    <interactant intactId="EBI-6570214">
        <id>P08908</id>
    </interactant>
    <interactant intactId="EBI-1028277">
        <id>P11362</id>
        <label>FGFR1</label>
    </interactant>
    <organismsDiffer>false</organismsDiffer>
    <experiments>9</experiments>
</comment>
<comment type="interaction">
    <interactant intactId="EBI-6570214">
        <id>P08908</id>
    </interactant>
    <interactant intactId="EBI-7165599">
        <id>O43194</id>
        <label>GPR39</label>
    </interactant>
    <organismsDiffer>false</organismsDiffer>
    <experiments>4</experiments>
</comment>
<comment type="subcellular location">
    <subcellularLocation>
        <location evidence="7 9 10 11 19">Cell membrane</location>
        <topology evidence="7 10 11 19">Multi-pass membrane protein</topology>
    </subcellularLocation>
    <subcellularLocation>
        <location evidence="1">Cell projection</location>
        <location evidence="1">Dendrite</location>
    </subcellularLocation>
</comment>
<comment type="tissue specificity">
    <text evidence="10 19">Detected in lymph nodes, thymus and spleen. Detected in activated T-cells, but not in resting T-cells.</text>
</comment>
<comment type="disease" evidence="6">
    <disease id="DI-03472">
        <name>Periodic fever, menstrual cycle-dependent</name>
        <acronym>PFMC</acronym>
        <description>A condition characterized by recurrent fevers up to 40 degrees Celsius associated with the luteal phase of the menstrual cycle. Women show menstrual cycle-dependent physiologic changes in relation to sex hormone levels. Because ovulation triggers a significant change in the hormonal milieu that is similar to local inflammation, a 0.5 to 1.0 degree Celsius increase in basal body temperature after ovulation is commonly associated with progesterone secretion and is believed to be triggered by the induction of several inflammatory cytokines.</description>
        <dbReference type="MIM" id="614674"/>
    </disease>
    <text>The disease is caused by variants affecting the gene represented in this entry.</text>
</comment>
<comment type="similarity">
    <text evidence="4">Belongs to the G-protein coupled receptor 1 family. 5-hydroxytryptamine receptor subfamily. HTR1A sub-subfamily.</text>
</comment>
<accession>P08908</accession>
<accession>Q6LAE7</accession>
<gene>
    <name evidence="27" type="primary">HTR1A</name>
    <name type="synonym">ADRB2RL1</name>
    <name type="synonym">ADRBRL1</name>
</gene>
<dbReference type="EMBL" id="M28269">
    <property type="protein sequence ID" value="AAA36440.1"/>
    <property type="molecule type" value="Genomic_DNA"/>
</dbReference>
<dbReference type="EMBL" id="X13556">
    <property type="protein sequence ID" value="CAA31908.1"/>
    <property type="molecule type" value="Genomic_DNA"/>
</dbReference>
<dbReference type="EMBL" id="X57829">
    <property type="protein sequence ID" value="CAA40962.1"/>
    <property type="molecule type" value="Genomic_DNA"/>
</dbReference>
<dbReference type="EMBL" id="M83181">
    <property type="protein sequence ID" value="AAA66493.1"/>
    <property type="molecule type" value="Genomic_DNA"/>
</dbReference>
<dbReference type="EMBL" id="AB041403">
    <property type="protein sequence ID" value="BAA94488.1"/>
    <property type="molecule type" value="Genomic_DNA"/>
</dbReference>
<dbReference type="EMBL" id="AF498978">
    <property type="protein sequence ID" value="AAM21125.1"/>
    <property type="molecule type" value="mRNA"/>
</dbReference>
<dbReference type="EMBL" id="BC069159">
    <property type="protein sequence ID" value="AAH69159.1"/>
    <property type="molecule type" value="mRNA"/>
</dbReference>
<dbReference type="EMBL" id="Z11168">
    <property type="protein sequence ID" value="CAA77560.1"/>
    <property type="molecule type" value="Genomic_DNA"/>
</dbReference>
<dbReference type="CCDS" id="CCDS34168.1"/>
<dbReference type="PIR" id="I38209">
    <property type="entry name" value="I38209"/>
</dbReference>
<dbReference type="RefSeq" id="NP_000515.2">
    <property type="nucleotide sequence ID" value="NM_000524.4"/>
</dbReference>
<dbReference type="PDB" id="7E2X">
    <property type="method" value="EM"/>
    <property type="resolution" value="3.00 A"/>
    <property type="chains" value="R=25-422"/>
</dbReference>
<dbReference type="PDB" id="7E2Y">
    <property type="method" value="EM"/>
    <property type="resolution" value="3.00 A"/>
    <property type="chains" value="R=25-422"/>
</dbReference>
<dbReference type="PDB" id="7E2Z">
    <property type="method" value="EM"/>
    <property type="resolution" value="3.10 A"/>
    <property type="chains" value="R=25-422"/>
</dbReference>
<dbReference type="PDB" id="8FY8">
    <property type="method" value="EM"/>
    <property type="resolution" value="2.79 A"/>
    <property type="chains" value="R=26-422"/>
</dbReference>
<dbReference type="PDB" id="8FYE">
    <property type="method" value="EM"/>
    <property type="resolution" value="2.85 A"/>
    <property type="chains" value="R=26-422"/>
</dbReference>
<dbReference type="PDB" id="8FYL">
    <property type="method" value="EM"/>
    <property type="resolution" value="2.94 A"/>
    <property type="chains" value="R=26-422"/>
</dbReference>
<dbReference type="PDB" id="8FYT">
    <property type="method" value="EM"/>
    <property type="resolution" value="2.64 A"/>
    <property type="chains" value="R=26-422"/>
</dbReference>
<dbReference type="PDB" id="8FYX">
    <property type="method" value="EM"/>
    <property type="resolution" value="2.62 A"/>
    <property type="chains" value="R=26-422"/>
</dbReference>
<dbReference type="PDB" id="8JSP">
    <property type="method" value="EM"/>
    <property type="resolution" value="3.65 A"/>
    <property type="chains" value="R=35-415"/>
</dbReference>
<dbReference type="PDB" id="8JT6">
    <property type="method" value="EM"/>
    <property type="resolution" value="3.00 A"/>
    <property type="chains" value="R=22-422"/>
</dbReference>
<dbReference type="PDB" id="8PJK">
    <property type="method" value="EM"/>
    <property type="resolution" value="2.40 A"/>
    <property type="chains" value="R=1-422"/>
</dbReference>
<dbReference type="PDB" id="8PKM">
    <property type="method" value="EM"/>
    <property type="resolution" value="2.90 A"/>
    <property type="chains" value="R=1-422"/>
</dbReference>
<dbReference type="PDB" id="8W8B">
    <property type="method" value="EM"/>
    <property type="resolution" value="3.00 A"/>
    <property type="chains" value="R=22-422"/>
</dbReference>
<dbReference type="PDBsum" id="7E2X"/>
<dbReference type="PDBsum" id="7E2Y"/>
<dbReference type="PDBsum" id="7E2Z"/>
<dbReference type="PDBsum" id="8FY8"/>
<dbReference type="PDBsum" id="8FYE"/>
<dbReference type="PDBsum" id="8FYL"/>
<dbReference type="PDBsum" id="8FYT"/>
<dbReference type="PDBsum" id="8FYX"/>
<dbReference type="PDBsum" id="8JSP"/>
<dbReference type="PDBsum" id="8JT6"/>
<dbReference type="PDBsum" id="8PJK"/>
<dbReference type="PDBsum" id="8PKM"/>
<dbReference type="PDBsum" id="8W8B"/>
<dbReference type="EMDB" id="EMD-17712"/>
<dbReference type="EMDB" id="EMD-17747"/>
<dbReference type="EMDB" id="EMD-29560"/>
<dbReference type="EMDB" id="EMD-29571"/>
<dbReference type="EMDB" id="EMD-29585"/>
<dbReference type="EMDB" id="EMD-29597"/>
<dbReference type="EMDB" id="EMD-29599"/>
<dbReference type="EMDB" id="EMD-30971"/>
<dbReference type="EMDB" id="EMD-30972"/>
<dbReference type="EMDB" id="EMD-30973"/>
<dbReference type="EMDB" id="EMD-36626"/>
<dbReference type="EMDB" id="EMD-36634"/>
<dbReference type="EMDB" id="EMD-37351"/>
<dbReference type="SMR" id="P08908"/>
<dbReference type="BioGRID" id="109582">
    <property type="interactions" value="28"/>
</dbReference>
<dbReference type="CORUM" id="P08908"/>
<dbReference type="FunCoup" id="P08908">
    <property type="interactions" value="1053"/>
</dbReference>
<dbReference type="IntAct" id="P08908">
    <property type="interactions" value="6"/>
</dbReference>
<dbReference type="STRING" id="9606.ENSP00000316244"/>
<dbReference type="BindingDB" id="P08908"/>
<dbReference type="ChEMBL" id="CHEMBL214"/>
<dbReference type="DrugBank" id="DB01465">
    <property type="generic name" value="2,5-Dimethoxyamphetamine"/>
</dbReference>
<dbReference type="DrugBank" id="DB01484">
    <property type="generic name" value="4-Bromo-2,5-dimethoxyamphetamine"/>
</dbReference>
<dbReference type="DrugBank" id="DB14010">
    <property type="generic name" value="5-methoxy-N,N-dimethyltryptamine"/>
</dbReference>
<dbReference type="DrugBank" id="DB01614">
    <property type="generic name" value="Acepromazine"/>
</dbReference>
<dbReference type="DrugBank" id="DB00866">
    <property type="generic name" value="Alprenolol"/>
</dbReference>
<dbReference type="DrugBank" id="DB01616">
    <property type="generic name" value="Alverine"/>
</dbReference>
<dbReference type="DrugBank" id="DB00321">
    <property type="generic name" value="Amitriptyline"/>
</dbReference>
<dbReference type="DrugBank" id="DB00543">
    <property type="generic name" value="Amoxapine"/>
</dbReference>
<dbReference type="DrugBank" id="DB00714">
    <property type="generic name" value="Apomorphine"/>
</dbReference>
<dbReference type="DrugBank" id="DB01238">
    <property type="generic name" value="Aripiprazole"/>
</dbReference>
<dbReference type="DrugBank" id="DB14185">
    <property type="generic name" value="Aripiprazole lauroxil"/>
</dbReference>
<dbReference type="DrugBank" id="DB06216">
    <property type="generic name" value="Asenapine"/>
</dbReference>
<dbReference type="DrugBank" id="DB19033">
    <property type="generic name" value="Befiradol"/>
</dbReference>
<dbReference type="DrugBank" id="DB04888">
    <property type="generic name" value="Bifeprunox"/>
</dbReference>
<dbReference type="DrugBank" id="DB08807">
    <property type="generic name" value="Bopindolol"/>
</dbReference>
<dbReference type="DrugBank" id="DB09128">
    <property type="generic name" value="Brexpiprazole"/>
</dbReference>
<dbReference type="DrugBank" id="DB01200">
    <property type="generic name" value="Bromocriptine"/>
</dbReference>
<dbReference type="DrugBank" id="DB00490">
    <property type="generic name" value="Buspirone"/>
</dbReference>
<dbReference type="DrugBank" id="DB00248">
    <property type="generic name" value="Cabergoline"/>
</dbReference>
<dbReference type="DrugBank" id="DB09061">
    <property type="generic name" value="Cannabidiol"/>
</dbReference>
<dbReference type="DrugBank" id="DB06016">
    <property type="generic name" value="Cariprazine"/>
</dbReference>
<dbReference type="DrugBank" id="DB00477">
    <property type="generic name" value="Chlorpromazine"/>
</dbReference>
<dbReference type="DrugBank" id="DB01239">
    <property type="generic name" value="Chlorprothixene"/>
</dbReference>
<dbReference type="DrugBank" id="DB08810">
    <property type="generic name" value="Cinitapride"/>
</dbReference>
<dbReference type="DrugBank" id="DB00363">
    <property type="generic name" value="Clozapine"/>
</dbReference>
<dbReference type="DrugBank" id="DB09000">
    <property type="generic name" value="Cyamemazine"/>
</dbReference>
<dbReference type="DrugBank" id="DB04884">
    <property type="generic name" value="Dapoxetine"/>
</dbReference>
<dbReference type="DrugBank" id="DB01151">
    <property type="generic name" value="Desipramine"/>
</dbReference>
<dbReference type="DrugBank" id="DB11273">
    <property type="generic name" value="Dihydroergocornine"/>
</dbReference>
<dbReference type="DrugBank" id="DB13345">
    <property type="generic name" value="Dihydroergocristine"/>
</dbReference>
<dbReference type="DrugBank" id="DB00320">
    <property type="generic name" value="Dihydroergotamine"/>
</dbReference>
<dbReference type="DrugBank" id="DB00988">
    <property type="generic name" value="Dopamine"/>
</dbReference>
<dbReference type="DrugBank" id="DB09167">
    <property type="generic name" value="Dosulepin"/>
</dbReference>
<dbReference type="DrugBank" id="DB06446">
    <property type="generic name" value="Dotarizine"/>
</dbReference>
<dbReference type="DrugBank" id="DB01142">
    <property type="generic name" value="Doxepin"/>
</dbReference>
<dbReference type="DrugBank" id="DB16040">
    <property type="generic name" value="DU125530"/>
</dbReference>
<dbReference type="DrugBank" id="DB00216">
    <property type="generic name" value="Eletriptan"/>
</dbReference>
<dbReference type="DrugBank" id="DB12883">
    <property type="generic name" value="Eltoprazine"/>
</dbReference>
<dbReference type="DrugBank" id="DB01049">
    <property type="generic name" value="Ergoloid mesylate"/>
</dbReference>
<dbReference type="DrugBank" id="DB00696">
    <property type="generic name" value="Ergotamine"/>
</dbReference>
<dbReference type="DrugBank" id="DB01175">
    <property type="generic name" value="Escitalopram"/>
</dbReference>
<dbReference type="DrugBank" id="DB16936">
    <property type="generic name" value="F-15599"/>
</dbReference>
<dbReference type="DrugBank" id="DB00574">
    <property type="generic name" value="Fenfluramine"/>
</dbReference>
<dbReference type="DrugBank" id="DB04908">
    <property type="generic name" value="Flibanserin"/>
</dbReference>
<dbReference type="DrugBank" id="DB12184">
    <property type="generic name" value="Gepirone"/>
</dbReference>
<dbReference type="DrugBank" id="DB12141">
    <property type="generic name" value="Gilteritinib"/>
</dbReference>
<dbReference type="DrugBank" id="DB00502">
    <property type="generic name" value="Haloperidol"/>
</dbReference>
<dbReference type="DrugBank" id="DB04946">
    <property type="generic name" value="Iloperidone"/>
</dbReference>
<dbReference type="DrugBank" id="DB00458">
    <property type="generic name" value="Imipramine"/>
</dbReference>
<dbReference type="DrugBank" id="DB01221">
    <property type="generic name" value="Ketamine"/>
</dbReference>
<dbReference type="DrugBank" id="DB12540">
    <property type="generic name" value="Lecozotan"/>
</dbReference>
<dbReference type="DrugBank" id="DB04970">
    <property type="generic name" value="Lesopitron"/>
</dbReference>
<dbReference type="DrugBank" id="DB05509">
    <property type="generic name" value="LI-301"/>
</dbReference>
<dbReference type="DrugBank" id="DB00589">
    <property type="generic name" value="Lisuride"/>
</dbReference>
<dbReference type="DrugBank" id="DB04948">
    <property type="generic name" value="Lofexidine"/>
</dbReference>
<dbReference type="DrugBank" id="DB00408">
    <property type="generic name" value="Loxapine"/>
</dbReference>
<dbReference type="DrugBank" id="DB08815">
    <property type="generic name" value="Lurasidone"/>
</dbReference>
<dbReference type="DrugBank" id="DB04829">
    <property type="generic name" value="Lysergic acid diethylamide"/>
</dbReference>
<dbReference type="DrugBank" id="DB14009">
    <property type="generic name" value="Medical Cannabis"/>
</dbReference>
<dbReference type="DrugBank" id="DB00422">
    <property type="generic name" value="Methylphenidate"/>
</dbReference>
<dbReference type="DrugBank" id="DB00247">
    <property type="generic name" value="Methysergide"/>
</dbReference>
<dbReference type="DrugBank" id="DB06148">
    <property type="generic name" value="Mianserin"/>
</dbReference>
<dbReference type="DrugBank" id="DB05339">
    <property type="generic name" value="MN-305"/>
</dbReference>
<dbReference type="DrugBank" id="DB01618">
    <property type="generic name" value="Molindone"/>
</dbReference>
<dbReference type="DrugBank" id="DB14011">
    <property type="generic name" value="Nabiximols"/>
</dbReference>
<dbReference type="DrugBank" id="DB05562">
    <property type="generic name" value="Naluzotan"/>
</dbReference>
<dbReference type="DrugBank" id="DB00952">
    <property type="generic name" value="Naratriptan"/>
</dbReference>
<dbReference type="DrugBank" id="DB01149">
    <property type="generic name" value="Nefazodone"/>
</dbReference>
<dbReference type="DrugBank" id="DB00540">
    <property type="generic name" value="Nortriptyline"/>
</dbReference>
<dbReference type="DrugBank" id="DB00334">
    <property type="generic name" value="Olanzapine"/>
</dbReference>
<dbReference type="DrugBank" id="DB00904">
    <property type="generic name" value="Ondansetron"/>
</dbReference>
<dbReference type="DrugBank" id="DB05422">
    <property type="generic name" value="OPC-14523"/>
</dbReference>
<dbReference type="DrugBank" id="DB00935">
    <property type="generic name" value="Oxymetazoline"/>
</dbReference>
<dbReference type="DrugBank" id="DB01267">
    <property type="generic name" value="Paliperidone"/>
</dbReference>
<dbReference type="DrugBank" id="DB12061">
    <property type="generic name" value="Pardoprunox"/>
</dbReference>
<dbReference type="DrugBank" id="DB00715">
    <property type="generic name" value="Paroxetine"/>
</dbReference>
<dbReference type="DrugBank" id="DB01359">
    <property type="generic name" value="Penbutolol"/>
</dbReference>
<dbReference type="DrugBank" id="DB01186">
    <property type="generic name" value="Pergolide"/>
</dbReference>
<dbReference type="DrugBank" id="DB08922">
    <property type="generic name" value="Perospirone"/>
</dbReference>
<dbReference type="DrugBank" id="DB12361">
    <property type="generic name" value="Piclozotan"/>
</dbReference>
<dbReference type="DrugBank" id="DB00960">
    <property type="generic name" value="Pindolol"/>
</dbReference>
<dbReference type="DrugBank" id="DB01621">
    <property type="generic name" value="Pipotiazine"/>
</dbReference>
<dbReference type="DrugBank" id="DB12478">
    <property type="generic name" value="Piribedil"/>
</dbReference>
<dbReference type="DrugBank" id="DB09244">
    <property type="generic name" value="Pirlindole"/>
</dbReference>
<dbReference type="DrugBank" id="DB12288">
    <property type="generic name" value="Piromelatine"/>
</dbReference>
<dbReference type="DrugBank" id="DB06153">
    <property type="generic name" value="Pizotifen"/>
</dbReference>
<dbReference type="DrugBank" id="DB00413">
    <property type="generic name" value="Pramipexole"/>
</dbReference>
<dbReference type="DrugBank" id="DB00571">
    <property type="generic name" value="Propranolol"/>
</dbReference>
<dbReference type="DrugBank" id="DB01224">
    <property type="generic name" value="Quetiapine"/>
</dbReference>
<dbReference type="DrugBank" id="DB06506">
    <property type="generic name" value="Repinotan"/>
</dbReference>
<dbReference type="DrugBank" id="DB00734">
    <property type="generic name" value="Risperidone"/>
</dbReference>
<dbReference type="DrugBank" id="DB00953">
    <property type="generic name" value="Rizatriptan"/>
</dbReference>
<dbReference type="DrugBank" id="DB06538">
    <property type="generic name" value="Robalzotan"/>
</dbReference>
<dbReference type="DrugBank" id="DB05271">
    <property type="generic name" value="Rotigotine"/>
</dbReference>
<dbReference type="DrugBank" id="DB06454">
    <property type="generic name" value="Sarizotan"/>
</dbReference>
<dbReference type="DrugBank" id="DB15665">
    <property type="generic name" value="SEP-363856"/>
</dbReference>
<dbReference type="DrugBank" id="DB16629">
    <property type="generic name" value="Serdexmethylphenidate"/>
</dbReference>
<dbReference type="DrugBank" id="DB08839">
    <property type="generic name" value="Serotonin"/>
</dbReference>
<dbReference type="DrugBank" id="DB09304">
    <property type="generic name" value="Setiptiline"/>
</dbReference>
<dbReference type="DrugBank" id="DB17056">
    <property type="generic name" value="Spiperone"/>
</dbReference>
<dbReference type="DrugBank" id="DB00669">
    <property type="generic name" value="Sumatriptan"/>
</dbReference>
<dbReference type="DrugBank" id="DB13775">
    <property type="generic name" value="Tertatolol"/>
</dbReference>
<dbReference type="DrugBank" id="DB11755">
    <property type="generic name" value="Tetrahydrocannabivarin"/>
</dbReference>
<dbReference type="DrugBank" id="DB09289">
    <property type="generic name" value="Tianeptine"/>
</dbReference>
<dbReference type="DrugBank" id="DB13025">
    <property type="generic name" value="Tiapride"/>
</dbReference>
<dbReference type="DrugBank" id="DB00656">
    <property type="generic name" value="Trazodone"/>
</dbReference>
<dbReference type="DrugBank" id="DB00726">
    <property type="generic name" value="Trimipramine"/>
</dbReference>
<dbReference type="DrugBank" id="DB12661">
    <property type="generic name" value="Urapidil"/>
</dbReference>
<dbReference type="DrugBank" id="DB06684">
    <property type="generic name" value="Vilazodone"/>
</dbReference>
<dbReference type="DrugBank" id="DB09068">
    <property type="generic name" value="Vortioxetine"/>
</dbReference>
<dbReference type="DrugBank" id="DB06393">
    <property type="generic name" value="Xaliproden"/>
</dbReference>
<dbReference type="DrugBank" id="DB01392">
    <property type="generic name" value="Yohimbine"/>
</dbReference>
<dbReference type="DrugBank" id="DB00246">
    <property type="generic name" value="Ziprasidone"/>
</dbReference>
<dbReference type="DrugBank" id="DB00315">
    <property type="generic name" value="Zolmitriptan"/>
</dbReference>
<dbReference type="DrugCentral" id="P08908"/>
<dbReference type="GuidetoPHARMACOLOGY" id="1"/>
<dbReference type="TCDB" id="9.A.14.3.14">
    <property type="family name" value="the g-protein-coupled receptor (gpcr) family"/>
</dbReference>
<dbReference type="GlyCosmos" id="P08908">
    <property type="glycosylation" value="3 sites, No reported glycans"/>
</dbReference>
<dbReference type="GlyGen" id="P08908">
    <property type="glycosylation" value="6 sites, 1 O-linked glycan (2 sites)"/>
</dbReference>
<dbReference type="iPTMnet" id="P08908"/>
<dbReference type="PhosphoSitePlus" id="P08908"/>
<dbReference type="SwissPalm" id="P08908"/>
<dbReference type="BioMuta" id="HTR1A"/>
<dbReference type="DMDM" id="231454"/>
<dbReference type="jPOST" id="P08908"/>
<dbReference type="MassIVE" id="P08908"/>
<dbReference type="PaxDb" id="9606-ENSP00000316244"/>
<dbReference type="PeptideAtlas" id="P08908"/>
<dbReference type="ProteomicsDB" id="52173"/>
<dbReference type="Antibodypedia" id="2959">
    <property type="antibodies" value="309 antibodies from 38 providers"/>
</dbReference>
<dbReference type="DNASU" id="3350"/>
<dbReference type="Ensembl" id="ENST00000323865.5">
    <property type="protein sequence ID" value="ENSP00000316244.4"/>
    <property type="gene ID" value="ENSG00000178394.5"/>
</dbReference>
<dbReference type="GeneID" id="3350"/>
<dbReference type="KEGG" id="hsa:3350"/>
<dbReference type="MANE-Select" id="ENST00000323865.5">
    <property type="protein sequence ID" value="ENSP00000316244.4"/>
    <property type="RefSeq nucleotide sequence ID" value="NM_000524.4"/>
    <property type="RefSeq protein sequence ID" value="NP_000515.2"/>
</dbReference>
<dbReference type="AGR" id="HGNC:5286"/>
<dbReference type="CTD" id="3350"/>
<dbReference type="DisGeNET" id="3350"/>
<dbReference type="GeneCards" id="HTR1A"/>
<dbReference type="HGNC" id="HGNC:5286">
    <property type="gene designation" value="HTR1A"/>
</dbReference>
<dbReference type="HPA" id="ENSG00000178394">
    <property type="expression patterns" value="Group enriched (brain, ovary)"/>
</dbReference>
<dbReference type="MalaCards" id="HTR1A"/>
<dbReference type="MIM" id="109760">
    <property type="type" value="gene"/>
</dbReference>
<dbReference type="MIM" id="614674">
    <property type="type" value="phenotype"/>
</dbReference>
<dbReference type="neXtProt" id="NX_P08908"/>
<dbReference type="OpenTargets" id="ENSG00000178394"/>
<dbReference type="Orphanet" id="498251">
    <property type="disease" value="Menstrual cycle-dependent periodic fever"/>
</dbReference>
<dbReference type="PharmGKB" id="PA192"/>
<dbReference type="VEuPathDB" id="HostDB:ENSG00000178394"/>
<dbReference type="eggNOG" id="KOG3656">
    <property type="taxonomic scope" value="Eukaryota"/>
</dbReference>
<dbReference type="GeneTree" id="ENSGT00940000154484"/>
<dbReference type="HOGENOM" id="CLU_009579_11_1_1"/>
<dbReference type="InParanoid" id="P08908"/>
<dbReference type="OMA" id="VQHCNSS"/>
<dbReference type="OrthoDB" id="5955450at2759"/>
<dbReference type="PAN-GO" id="P08908">
    <property type="GO annotations" value="8 GO annotations based on evolutionary models"/>
</dbReference>
<dbReference type="PhylomeDB" id="P08908"/>
<dbReference type="TreeFam" id="TF316350"/>
<dbReference type="PathwayCommons" id="P08908"/>
<dbReference type="Reactome" id="R-HSA-390666">
    <property type="pathway name" value="Serotonin receptors"/>
</dbReference>
<dbReference type="SignaLink" id="P08908"/>
<dbReference type="SIGNOR" id="P08908"/>
<dbReference type="BioGRID-ORCS" id="3350">
    <property type="hits" value="9 hits in 1151 CRISPR screens"/>
</dbReference>
<dbReference type="CD-CODE" id="7F2B39AE">
    <property type="entry name" value="Synthetic Condensate 000262"/>
</dbReference>
<dbReference type="GenomeRNAi" id="3350"/>
<dbReference type="Pharos" id="P08908">
    <property type="development level" value="Tclin"/>
</dbReference>
<dbReference type="PRO" id="PR:P08908"/>
<dbReference type="Proteomes" id="UP000005640">
    <property type="component" value="Chromosome 5"/>
</dbReference>
<dbReference type="RNAct" id="P08908">
    <property type="molecule type" value="protein"/>
</dbReference>
<dbReference type="Bgee" id="ENSG00000178394">
    <property type="expression patterns" value="Expressed in entorhinal cortex and 48 other cell types or tissues"/>
</dbReference>
<dbReference type="ExpressionAtlas" id="P08908">
    <property type="expression patterns" value="baseline and differential"/>
</dbReference>
<dbReference type="GO" id="GO:0030425">
    <property type="term" value="C:dendrite"/>
    <property type="evidence" value="ECO:0000318"/>
    <property type="project" value="GO_Central"/>
</dbReference>
<dbReference type="GO" id="GO:0005886">
    <property type="term" value="C:plasma membrane"/>
    <property type="evidence" value="ECO:0000314"/>
    <property type="project" value="UniProtKB"/>
</dbReference>
<dbReference type="GO" id="GO:0045202">
    <property type="term" value="C:synapse"/>
    <property type="evidence" value="ECO:0007669"/>
    <property type="project" value="GOC"/>
</dbReference>
<dbReference type="GO" id="GO:0004993">
    <property type="term" value="F:G protein-coupled serotonin receptor activity"/>
    <property type="evidence" value="ECO:0000314"/>
    <property type="project" value="UniProtKB"/>
</dbReference>
<dbReference type="GO" id="GO:0001586">
    <property type="term" value="F:Gi/o-coupled serotonin receptor activity"/>
    <property type="evidence" value="ECO:0000314"/>
    <property type="project" value="UniProtKB"/>
</dbReference>
<dbReference type="GO" id="GO:0030594">
    <property type="term" value="F:neurotransmitter receptor activity"/>
    <property type="evidence" value="ECO:0000318"/>
    <property type="project" value="GO_Central"/>
</dbReference>
<dbReference type="GO" id="GO:0090722">
    <property type="term" value="F:receptor-receptor interaction"/>
    <property type="evidence" value="ECO:0000314"/>
    <property type="project" value="ParkinsonsUK-UCL"/>
</dbReference>
<dbReference type="GO" id="GO:0051378">
    <property type="term" value="F:serotonin binding"/>
    <property type="evidence" value="ECO:0000318"/>
    <property type="project" value="GO_Central"/>
</dbReference>
<dbReference type="GO" id="GO:0099589">
    <property type="term" value="F:serotonin receptor activity"/>
    <property type="evidence" value="ECO:0000314"/>
    <property type="project" value="UniProt"/>
</dbReference>
<dbReference type="GO" id="GO:0007198">
    <property type="term" value="P:adenylate cyclase-inhibiting serotonin receptor signaling pathway"/>
    <property type="evidence" value="ECO:0000314"/>
    <property type="project" value="UniProtKB"/>
</dbReference>
<dbReference type="GO" id="GO:0001662">
    <property type="term" value="P:behavioral fear response"/>
    <property type="evidence" value="ECO:0000250"/>
    <property type="project" value="UniProtKB"/>
</dbReference>
<dbReference type="GO" id="GO:0007268">
    <property type="term" value="P:chemical synaptic transmission"/>
    <property type="evidence" value="ECO:0000318"/>
    <property type="project" value="GO_Central"/>
</dbReference>
<dbReference type="GO" id="GO:0035640">
    <property type="term" value="P:exploration behavior"/>
    <property type="evidence" value="ECO:0000250"/>
    <property type="project" value="UniProtKB"/>
</dbReference>
<dbReference type="GO" id="GO:0007186">
    <property type="term" value="P:G protein-coupled receptor signaling pathway"/>
    <property type="evidence" value="ECO:0000315"/>
    <property type="project" value="UniProtKB"/>
</dbReference>
<dbReference type="GO" id="GO:0007187">
    <property type="term" value="P:G protein-coupled receptor signaling pathway, coupled to cyclic nucleotide second messenger"/>
    <property type="evidence" value="ECO:0000318"/>
    <property type="project" value="GO_Central"/>
</dbReference>
<dbReference type="GO" id="GO:0007214">
    <property type="term" value="P:gamma-aminobutyric acid signaling pathway"/>
    <property type="evidence" value="ECO:0007669"/>
    <property type="project" value="Ensembl"/>
</dbReference>
<dbReference type="GO" id="GO:0008284">
    <property type="term" value="P:positive regulation of cell population proliferation"/>
    <property type="evidence" value="ECO:0000304"/>
    <property type="project" value="ProtInc"/>
</dbReference>
<dbReference type="GO" id="GO:0050795">
    <property type="term" value="P:regulation of behavior"/>
    <property type="evidence" value="ECO:0007669"/>
    <property type="project" value="InterPro"/>
</dbReference>
<dbReference type="GO" id="GO:0042053">
    <property type="term" value="P:regulation of dopamine metabolic process"/>
    <property type="evidence" value="ECO:0000250"/>
    <property type="project" value="UniProtKB"/>
</dbReference>
<dbReference type="GO" id="GO:0046883">
    <property type="term" value="P:regulation of hormone secretion"/>
    <property type="evidence" value="ECO:0007669"/>
    <property type="project" value="InterPro"/>
</dbReference>
<dbReference type="GO" id="GO:0014062">
    <property type="term" value="P:regulation of serotonin secretion"/>
    <property type="evidence" value="ECO:0000250"/>
    <property type="project" value="UniProtKB"/>
</dbReference>
<dbReference type="GO" id="GO:0019229">
    <property type="term" value="P:regulation of vasoconstriction"/>
    <property type="evidence" value="ECO:0007669"/>
    <property type="project" value="InterPro"/>
</dbReference>
<dbReference type="GO" id="GO:0042428">
    <property type="term" value="P:serotonin metabolic process"/>
    <property type="evidence" value="ECO:0000250"/>
    <property type="project" value="UniProtKB"/>
</dbReference>
<dbReference type="GO" id="GO:0007210">
    <property type="term" value="P:serotonin receptor signaling pathway"/>
    <property type="evidence" value="ECO:0000250"/>
    <property type="project" value="UniProtKB"/>
</dbReference>
<dbReference type="CDD" id="cd15330">
    <property type="entry name" value="7tmA_5-HT1A_vertebrates"/>
    <property type="match status" value="1"/>
</dbReference>
<dbReference type="Gene3D" id="1.20.1070.10">
    <property type="entry name" value="Rhodopsin 7-helix transmembrane proteins"/>
    <property type="match status" value="1"/>
</dbReference>
<dbReference type="InterPro" id="IPR000610">
    <property type="entry name" value="5HT1A_rcpt"/>
</dbReference>
<dbReference type="InterPro" id="IPR002231">
    <property type="entry name" value="5HT_rcpt"/>
</dbReference>
<dbReference type="InterPro" id="IPR000276">
    <property type="entry name" value="GPCR_Rhodpsn"/>
</dbReference>
<dbReference type="InterPro" id="IPR017452">
    <property type="entry name" value="GPCR_Rhodpsn_7TM"/>
</dbReference>
<dbReference type="PANTHER" id="PTHR24248:SF191">
    <property type="entry name" value="5-HYDROXYTRYPTAMINE RECEPTOR 1A"/>
    <property type="match status" value="1"/>
</dbReference>
<dbReference type="PANTHER" id="PTHR24248">
    <property type="entry name" value="ADRENERGIC RECEPTOR-RELATED G-PROTEIN COUPLED RECEPTOR"/>
    <property type="match status" value="1"/>
</dbReference>
<dbReference type="Pfam" id="PF00001">
    <property type="entry name" value="7tm_1"/>
    <property type="match status" value="1"/>
</dbReference>
<dbReference type="PRINTS" id="PR00512">
    <property type="entry name" value="5HT1ARECEPTR"/>
</dbReference>
<dbReference type="PRINTS" id="PR01101">
    <property type="entry name" value="5HTRECEPTOR"/>
</dbReference>
<dbReference type="PRINTS" id="PR00237">
    <property type="entry name" value="GPCRRHODOPSN"/>
</dbReference>
<dbReference type="SMART" id="SM01381">
    <property type="entry name" value="7TM_GPCR_Srsx"/>
    <property type="match status" value="1"/>
</dbReference>
<dbReference type="SUPFAM" id="SSF81321">
    <property type="entry name" value="Family A G protein-coupled receptor-like"/>
    <property type="match status" value="1"/>
</dbReference>
<dbReference type="PROSITE" id="PS00237">
    <property type="entry name" value="G_PROTEIN_RECEP_F1_1"/>
    <property type="match status" value="1"/>
</dbReference>
<dbReference type="PROSITE" id="PS50262">
    <property type="entry name" value="G_PROTEIN_RECEP_F1_2"/>
    <property type="match status" value="1"/>
</dbReference>
<feature type="chain" id="PRO_0000068903" description="5-hydroxytryptamine receptor 1A">
    <location>
        <begin position="1"/>
        <end position="422"/>
    </location>
</feature>
<feature type="topological domain" description="Extracellular" evidence="12 29">
    <location>
        <begin position="1"/>
        <end position="38"/>
    </location>
</feature>
<feature type="transmembrane region" description="Helical; Name=1" evidence="12 29">
    <location>
        <begin position="39"/>
        <end position="59"/>
    </location>
</feature>
<feature type="topological domain" description="Cytoplasmic" evidence="12 29">
    <location>
        <begin position="60"/>
        <end position="73"/>
    </location>
</feature>
<feature type="transmembrane region" description="Helical; Name=2" evidence="12 29">
    <location>
        <begin position="74"/>
        <end position="98"/>
    </location>
</feature>
<feature type="topological domain" description="Extracellular" evidence="12 29">
    <location>
        <begin position="99"/>
        <end position="107"/>
    </location>
</feature>
<feature type="transmembrane region" description="Helical; Name=3" evidence="12 29">
    <location>
        <begin position="108"/>
        <end position="132"/>
    </location>
</feature>
<feature type="topological domain" description="Cytoplasmic" evidence="12 29">
    <location>
        <begin position="133"/>
        <end position="152"/>
    </location>
</feature>
<feature type="transmembrane region" description="Helical; Name=4" evidence="12 29">
    <location>
        <begin position="153"/>
        <end position="174"/>
    </location>
</feature>
<feature type="topological domain" description="Extracellular" evidence="12 29">
    <location>
        <begin position="175"/>
        <end position="193"/>
    </location>
</feature>
<feature type="transmembrane region" description="Helical; Name=5" evidence="12 29">
    <location>
        <begin position="194"/>
        <end position="216"/>
    </location>
</feature>
<feature type="topological domain" description="Cytoplasmic" evidence="12 29">
    <location>
        <begin position="217"/>
        <end position="346"/>
    </location>
</feature>
<feature type="transmembrane region" description="Helical; Name=6" evidence="12 29">
    <location>
        <begin position="347"/>
        <end position="370"/>
    </location>
</feature>
<feature type="topological domain" description="Extracellular" evidence="12 29">
    <location>
        <begin position="371"/>
        <end position="378"/>
    </location>
</feature>
<feature type="transmembrane region" description="Helical; Name=7" evidence="12 29">
    <location>
        <begin position="379"/>
        <end position="403"/>
    </location>
</feature>
<feature type="topological domain" description="Cytoplasmic" evidence="12 29">
    <location>
        <begin position="404"/>
        <end position="422"/>
    </location>
</feature>
<feature type="region of interest" description="Disordered" evidence="5">
    <location>
        <begin position="1"/>
        <end position="23"/>
    </location>
</feature>
<feature type="region of interest" description="Disordered" evidence="5">
    <location>
        <begin position="235"/>
        <end position="262"/>
    </location>
</feature>
<feature type="short sequence motif" description="DRY motif; important for ligand-induced conformation changes" evidence="2">
    <location>
        <begin position="133"/>
        <end position="135"/>
    </location>
</feature>
<feature type="short sequence motif" description="NPxxY motif; important for ligand-induced conformation changes and signaling" evidence="2">
    <location>
        <begin position="396"/>
        <end position="400"/>
    </location>
</feature>
<feature type="binding site" evidence="12 30">
    <location>
        <position position="116"/>
    </location>
    <ligand>
        <name>serotonin</name>
        <dbReference type="ChEBI" id="CHEBI:350546"/>
    </ligand>
</feature>
<feature type="binding site" evidence="12 30">
    <location>
        <position position="120"/>
    </location>
    <ligand>
        <name>serotonin</name>
        <dbReference type="ChEBI" id="CHEBI:350546"/>
    </ligand>
</feature>
<feature type="binding site" evidence="12">
    <location>
        <position position="314"/>
    </location>
    <ligand>
        <name>1D-myo-inositol 4-phosphate</name>
        <dbReference type="ChEBI" id="CHEBI:58469"/>
    </ligand>
</feature>
<feature type="binding site" evidence="12">
    <location>
        <position position="345"/>
    </location>
    <ligand>
        <name>1D-myo-inositol 4-phosphate</name>
        <dbReference type="ChEBI" id="CHEBI:58469"/>
    </ligand>
</feature>
<feature type="binding site" evidence="12">
    <location>
        <position position="346"/>
    </location>
    <ligand>
        <name>1D-myo-inositol 4-phosphate</name>
        <dbReference type="ChEBI" id="CHEBI:58469"/>
    </ligand>
</feature>
<feature type="binding site" evidence="12">
    <location>
        <position position="352"/>
    </location>
    <ligand>
        <name>1D-myo-inositol 4-phosphate</name>
        <dbReference type="ChEBI" id="CHEBI:58469"/>
    </ligand>
</feature>
<feature type="binding site" evidence="12">
    <location>
        <position position="403"/>
    </location>
    <ligand>
        <name>1D-myo-inositol 4-phosphate</name>
        <dbReference type="ChEBI" id="CHEBI:58469"/>
    </ligand>
</feature>
<feature type="binding site" evidence="12">
    <location>
        <position position="404"/>
    </location>
    <ligand>
        <name>1D-myo-inositol 4-phosphate</name>
        <dbReference type="ChEBI" id="CHEBI:58469"/>
    </ligand>
</feature>
<feature type="binding site" evidence="12">
    <location>
        <position position="405"/>
    </location>
    <ligand>
        <name>1D-myo-inositol 4-phosphate</name>
        <dbReference type="ChEBI" id="CHEBI:58469"/>
    </ligand>
</feature>
<feature type="glycosylation site" description="N-linked (GlcNAc...) asparagine" evidence="3">
    <location>
        <position position="10"/>
    </location>
</feature>
<feature type="glycosylation site" description="N-linked (GlcNAc...) asparagine" evidence="3">
    <location>
        <position position="11"/>
    </location>
</feature>
<feature type="glycosylation site" description="N-linked (GlcNAc...) asparagine" evidence="3">
    <location>
        <position position="24"/>
    </location>
</feature>
<feature type="disulfide bond" evidence="4 12 14 16 29 32 33">
    <location>
        <begin position="109"/>
        <end position="187"/>
    </location>
</feature>
<feature type="sequence variant" id="VAR_003446" description="In dbSNP:rs1800041." evidence="20">
    <original>P</original>
    <variation>L</variation>
    <location>
        <position position="16"/>
    </location>
</feature>
<feature type="sequence variant" id="VAR_011826" description="In dbSNP:rs1799920." evidence="17">
    <original>G</original>
    <variation>S</variation>
    <location>
        <position position="22"/>
    </location>
</feature>
<feature type="sequence variant" id="VAR_011827" description="In dbSNP:rs1799921." evidence="17">
    <original>I</original>
    <variation>V</variation>
    <location>
        <position position="28"/>
    </location>
</feature>
<feature type="sequence variant" id="VAR_011828" description="In dbSNP:rs1800043.">
    <original>P</original>
    <variation>L</variation>
    <location>
        <position position="184"/>
    </location>
</feature>
<feature type="sequence variant" id="VAR_011829" description="In dbSNP:rs1800044.">
    <original>R</original>
    <variation>L</variation>
    <location>
        <position position="220"/>
    </location>
</feature>
<feature type="sequence variant" id="VAR_011830" description="In dbSNP:rs1800042." evidence="20">
    <original>G</original>
    <variation>D</variation>
    <location>
        <position position="273"/>
    </location>
</feature>
<feature type="mutagenesis site" description="Reduced activation of G proteins." evidence="12">
    <original>R</original>
    <variation>A</variation>
    <location>
        <position position="134"/>
    </location>
</feature>
<feature type="mutagenesis site" description="Increased activation of G alpha proteins in response to SEP363856-binding." evidence="14">
    <original>K</original>
    <variation>A</variation>
    <location>
        <position position="191"/>
    </location>
</feature>
<feature type="mutagenesis site" description="Reduced activation of G proteins." evidence="12">
    <original>K</original>
    <variation>A</variation>
    <location>
        <position position="345"/>
    </location>
</feature>
<feature type="mutagenesis site" description="Reduced G(i)/(o)-coupled receptor activity." evidence="13">
    <original>A</original>
    <variation>E</variation>
    <variation>S</variation>
    <location>
        <position position="365"/>
    </location>
</feature>
<feature type="mutagenesis site" description="Reduced activation of G proteins." evidence="12">
    <original>K</original>
    <variation>A</variation>
    <location>
        <position position="405"/>
    </location>
</feature>
<feature type="sequence conflict" description="In Ref. 1; AAA36440/CAA31908." evidence="26" ref="1">
    <original>RAA</original>
    <variation>PR</variation>
    <location>
        <begin position="152"/>
        <end position="154"/>
    </location>
</feature>
<feature type="sequence conflict" description="In Ref. 1; AAA36440/CAA31908." evidence="26" ref="1">
    <original>M</original>
    <variation>I</variation>
    <location>
        <position position="172"/>
    </location>
</feature>
<feature type="sequence conflict" description="In Ref. 8; no nucleotide entry." evidence="26" ref="8">
    <original>TFG</original>
    <variation>RPR</variation>
    <location>
        <begin position="200"/>
        <end position="202"/>
    </location>
</feature>
<feature type="sequence conflict" description="In Ref. 8; no nucleotide entry." evidence="26" ref="8">
    <original>K</original>
    <variation>R</variation>
    <location>
        <position position="228"/>
    </location>
</feature>
<feature type="sequence conflict" description="In Ref. 8; no nucleotide entry." evidence="26" ref="8">
    <original>A</original>
    <variation>AA</variation>
    <location>
        <position position="244"/>
    </location>
</feature>
<feature type="sequence conflict" description="In Ref. 8; no nucleotide entry." evidence="26" ref="8">
    <original>I</original>
    <variation>T</variation>
    <location>
        <position position="355"/>
    </location>
</feature>
<feature type="sequence conflict" description="In Ref. 8; no nucleotide entry." evidence="26" ref="8">
    <original>IVA</original>
    <variation>MRP</variation>
    <location>
        <begin position="363"/>
        <end position="365"/>
    </location>
</feature>
<feature type="sequence conflict" description="In Ref. 1; AAA36440/CAA31908." evidence="26" ref="1">
    <original>K</original>
    <variation>N</variation>
    <location>
        <position position="418"/>
    </location>
</feature>
<feature type="turn" evidence="36">
    <location>
        <begin position="33"/>
        <end position="35"/>
    </location>
</feature>
<feature type="helix" evidence="36">
    <location>
        <begin position="36"/>
        <end position="63"/>
    </location>
</feature>
<feature type="helix" evidence="36">
    <location>
        <begin position="65"/>
        <end position="67"/>
    </location>
</feature>
<feature type="helix" evidence="36">
    <location>
        <begin position="70"/>
        <end position="99"/>
    </location>
</feature>
<feature type="helix" evidence="36">
    <location>
        <begin position="106"/>
        <end position="139"/>
    </location>
</feature>
<feature type="helix" evidence="36">
    <location>
        <begin position="141"/>
        <end position="146"/>
    </location>
</feature>
<feature type="helix" evidence="36">
    <location>
        <begin position="150"/>
        <end position="173"/>
    </location>
</feature>
<feature type="helix" evidence="35">
    <location>
        <begin position="178"/>
        <end position="182"/>
    </location>
</feature>
<feature type="helix" evidence="36">
    <location>
        <begin position="193"/>
        <end position="203"/>
    </location>
</feature>
<feature type="helix" evidence="36">
    <location>
        <begin position="205"/>
        <end position="229"/>
    </location>
</feature>
<feature type="helix" evidence="36">
    <location>
        <begin position="325"/>
        <end position="367"/>
    </location>
</feature>
<feature type="turn" evidence="36">
    <location>
        <begin position="368"/>
        <end position="370"/>
    </location>
</feature>
<feature type="turn" evidence="36">
    <location>
        <begin position="372"/>
        <end position="374"/>
    </location>
</feature>
<feature type="helix" evidence="36">
    <location>
        <begin position="379"/>
        <end position="390"/>
    </location>
</feature>
<feature type="helix" evidence="36">
    <location>
        <begin position="392"/>
        <end position="401"/>
    </location>
</feature>
<feature type="strand" evidence="35">
    <location>
        <begin position="402"/>
        <end position="404"/>
    </location>
</feature>
<feature type="helix" evidence="36">
    <location>
        <begin position="405"/>
        <end position="414"/>
    </location>
</feature>
<protein>
    <recommendedName>
        <fullName>5-hydroxytryptamine receptor 1A</fullName>
        <shortName evidence="25">5-HT-1A</shortName>
        <shortName evidence="25">5-HT1A</shortName>
    </recommendedName>
    <alternativeName>
        <fullName evidence="24">G-21</fullName>
    </alternativeName>
    <alternativeName>
        <fullName>Serotonin receptor 1A</fullName>
    </alternativeName>
</protein>
<name>5HT1A_HUMAN</name>
<evidence type="ECO:0000250" key="1">
    <source>
        <dbReference type="UniProtKB" id="P19327"/>
    </source>
</evidence>
<evidence type="ECO:0000250" key="2">
    <source>
        <dbReference type="UniProtKB" id="P41595"/>
    </source>
</evidence>
<evidence type="ECO:0000255" key="3"/>
<evidence type="ECO:0000255" key="4">
    <source>
        <dbReference type="PROSITE-ProRule" id="PRU00521"/>
    </source>
</evidence>
<evidence type="ECO:0000256" key="5">
    <source>
        <dbReference type="SAM" id="MobiDB-lite"/>
    </source>
</evidence>
<evidence type="ECO:0000269" key="6">
    <source>
    </source>
</evidence>
<evidence type="ECO:0000269" key="7">
    <source>
    </source>
</evidence>
<evidence type="ECO:0000269" key="8">
    <source>
    </source>
</evidence>
<evidence type="ECO:0000269" key="9">
    <source>
    </source>
</evidence>
<evidence type="ECO:0000269" key="10">
    <source>
    </source>
</evidence>
<evidence type="ECO:0000269" key="11">
    <source>
    </source>
</evidence>
<evidence type="ECO:0000269" key="12">
    <source>
    </source>
</evidence>
<evidence type="ECO:0000269" key="13">
    <source>
    </source>
</evidence>
<evidence type="ECO:0000269" key="14">
    <source>
    </source>
</evidence>
<evidence type="ECO:0000269" key="15">
    <source>
    </source>
</evidence>
<evidence type="ECO:0000269" key="16">
    <source>
    </source>
</evidence>
<evidence type="ECO:0000269" key="17">
    <source>
    </source>
</evidence>
<evidence type="ECO:0000269" key="18">
    <source>
    </source>
</evidence>
<evidence type="ECO:0000269" key="19">
    <source>
    </source>
</evidence>
<evidence type="ECO:0000269" key="20">
    <source>
    </source>
</evidence>
<evidence type="ECO:0000303" key="21">
    <source>
    </source>
</evidence>
<evidence type="ECO:0000303" key="22">
    <source>
    </source>
</evidence>
<evidence type="ECO:0000303" key="23">
    <source>
    </source>
</evidence>
<evidence type="ECO:0000303" key="24">
    <source>
    </source>
</evidence>
<evidence type="ECO:0000303" key="25">
    <source ref="2"/>
</evidence>
<evidence type="ECO:0000305" key="26"/>
<evidence type="ECO:0000312" key="27">
    <source>
        <dbReference type="HGNC" id="HGNC:5286"/>
    </source>
</evidence>
<evidence type="ECO:0000312" key="28">
    <source>
        <dbReference type="PDB" id="8JSP"/>
    </source>
</evidence>
<evidence type="ECO:0007744" key="29">
    <source>
        <dbReference type="PDB" id="7E2X"/>
    </source>
</evidence>
<evidence type="ECO:0007744" key="30">
    <source>
        <dbReference type="PDB" id="7E2Y"/>
    </source>
</evidence>
<evidence type="ECO:0007744" key="31">
    <source>
        <dbReference type="PDB" id="7E2Z"/>
    </source>
</evidence>
<evidence type="ECO:0007744" key="32">
    <source>
        <dbReference type="PDB" id="8JSP"/>
    </source>
</evidence>
<evidence type="ECO:0007744" key="33">
    <source>
        <dbReference type="PDB" id="8JT6"/>
    </source>
</evidence>
<evidence type="ECO:0007744" key="34">
    <source>
        <dbReference type="PDB" id="8W8B"/>
    </source>
</evidence>
<evidence type="ECO:0007829" key="35">
    <source>
        <dbReference type="PDB" id="8FYX"/>
    </source>
</evidence>
<evidence type="ECO:0007829" key="36">
    <source>
        <dbReference type="PDB" id="8PJK"/>
    </source>
</evidence>
<reference key="1">
    <citation type="journal article" date="1987" name="Nature">
        <title>An intronless gene encoding a potential member of the family of receptors coupled to guanine nucleotide regulatory proteins.</title>
        <authorList>
            <person name="Kobilka B.K."/>
            <person name="Frielle T."/>
            <person name="Collins S."/>
            <person name="Yang-Feng T.L."/>
            <person name="Kobilka T.S."/>
            <person name="Francke U."/>
            <person name="Lefkowitz R.J."/>
            <person name="Caron M.G."/>
        </authorList>
    </citation>
    <scope>NUCLEOTIDE SEQUENCE [GENOMIC DNA]</scope>
    <scope>TISSUE SPECIFICITY</scope>
    <scope>SUBCELLULAR LOCATION</scope>
</reference>
<reference key="2">
    <citation type="submission" date="1991-02" db="EMBL/GenBank/DDBJ databases">
        <title>Nucleotide and deduced amino acid sequence of the human serotonin 5-HT1a receptor gene.</title>
        <authorList>
            <person name="Saltzman A.G."/>
            <person name="Morse B."/>
            <person name="Felder S."/>
        </authorList>
    </citation>
    <scope>NUCLEOTIDE SEQUENCE [GENOMIC DNA]</scope>
</reference>
<reference key="3">
    <citation type="submission" date="1992-05" db="EMBL/GenBank/DDBJ databases">
        <authorList>
            <person name="Levy F.O."/>
            <person name="Gudermann T."/>
            <person name="Birnbaumer M."/>
            <person name="Kaumann A.J."/>
            <person name="Birnbaumer L."/>
        </authorList>
    </citation>
    <scope>NUCLEOTIDE SEQUENCE [GENOMIC DNA]</scope>
</reference>
<reference key="4">
    <citation type="journal article" date="2004" name="Mol. Biol. Evol.">
        <title>Human-specific amino acid changes found in 103 protein-coding genes.</title>
        <authorList>
            <person name="Kitano T."/>
            <person name="Liu Y.-H."/>
            <person name="Ueda S."/>
            <person name="Saitou N."/>
        </authorList>
    </citation>
    <scope>NUCLEOTIDE SEQUENCE [GENOMIC DNA]</scope>
</reference>
<reference key="5">
    <citation type="submission" date="2002-04" db="EMBL/GenBank/DDBJ databases">
        <title>cDNA clones of human proteins involved in signal transduction sequenced by the Guthrie cDNA resource center (www.cdna.org).</title>
        <authorList>
            <person name="Puhl H.L. III"/>
            <person name="Ikeda S.R."/>
            <person name="Aronstam R.S."/>
        </authorList>
    </citation>
    <scope>NUCLEOTIDE SEQUENCE [LARGE SCALE MRNA]</scope>
    <source>
        <tissue>Brain</tissue>
    </source>
</reference>
<reference key="6">
    <citation type="journal article" date="2004" name="Genome Res.">
        <title>The status, quality, and expansion of the NIH full-length cDNA project: the Mammalian Gene Collection (MGC).</title>
        <authorList>
            <consortium name="The MGC Project Team"/>
        </authorList>
    </citation>
    <scope>NUCLEOTIDE SEQUENCE [LARGE SCALE MRNA]</scope>
</reference>
<reference key="7">
    <citation type="journal article" date="1991" name="Nucleic Acids Res.">
        <title>A polymerase chain reaction mediated by a single primer: cloning of genomic sequences adjacent to a serotonin receptor protein coding region.</title>
        <authorList>
            <person name="Parks C.L."/>
            <person name="Chang L.S."/>
            <person name="Shenk T."/>
        </authorList>
    </citation>
    <scope>NUCLEOTIDE SEQUENCE [GENOMIC DNA] OF 1-9</scope>
</reference>
<reference key="8">
    <citation type="journal article" date="1993" name="J. Immunol.">
        <title>Expression of 5HT1a receptors on activated human T cells. Regulation of cyclic AMP levels and T cell proliferation by 5-hydroxytryptamine.</title>
        <authorList>
            <person name="Aune T.M."/>
            <person name="McGrath K.M."/>
            <person name="Sarr T."/>
            <person name="Bombara M.P."/>
            <person name="Kelley K.A."/>
        </authorList>
    </citation>
    <scope>NUCLEOTIDE SEQUENCE [MRNA] OF 200-365</scope>
    <scope>FUNCTION</scope>
    <scope>SUBCELLULAR LOCATION</scope>
    <scope>TISSUE SPECIFICITY</scope>
</reference>
<reference key="9">
    <citation type="journal article" date="1988" name="Nature">
        <title>The genomic clone G-21 which resembles a beta-adrenergic receptor sequence encodes the 5-HT1A receptor.</title>
        <authorList>
            <person name="Fargin A."/>
            <person name="Raymond J.R."/>
            <person name="Lohse M.L."/>
            <person name="Kobilka B.K."/>
            <person name="Caron M.G."/>
            <person name="Lefkowitz R.J."/>
        </authorList>
    </citation>
    <scope>FUNCTION</scope>
    <scope>SUBCELLULAR LOCATION</scope>
</reference>
<reference key="10">
    <citation type="journal article" date="1994" name="J. Pharmacol. Exp. Ther.">
        <title>Agonist-induced desensitization and loss of high-affinity binding sites of stably expressed human 5-HT1A receptors.</title>
        <authorList>
            <person name="Harrington M.A."/>
            <person name="Shaw K."/>
            <person name="Zhong P."/>
            <person name="Ciaranello R.D."/>
        </authorList>
    </citation>
    <scope>FUNCTION</scope>
</reference>
<reference key="11">
    <citation type="journal article" date="2008" name="Chem. Rev.">
        <title>Serotonin receptors.</title>
        <authorList>
            <person name="Nichols D.E."/>
            <person name="Nichols C.D."/>
        </authorList>
    </citation>
    <scope>REVIEW</scope>
</reference>
<reference key="12">
    <citation type="journal article" date="2010" name="Cell. Signal.">
        <title>5-HT1A receptor-regulated signal transduction pathways in brain.</title>
        <authorList>
            <person name="Polter A.M."/>
            <person name="Li X."/>
        </authorList>
    </citation>
    <scope>REVIEW</scope>
</reference>
<reference key="13">
    <citation type="journal article" date="2011" name="Physiol. Res.">
        <title>Serotonin receptors - from molecular biology to clinical applications.</title>
        <authorList>
            <person name="Pytliak M."/>
            <person name="Vargova V."/>
            <person name="Mechirova V."/>
            <person name="Felsoci M."/>
        </authorList>
    </citation>
    <scope>REVIEW</scope>
</reference>
<reference key="14">
    <citation type="journal article" date="2012" name="Hum. Mutat.">
        <title>Menstrual cycle-dependent febrile episode mediated by sequence-specific repression of poly(ADP-ribose) polymerase-1 on the transcription of the human serotonin receptor 1A gene.</title>
        <authorList>
            <person name="Jiang Y.C."/>
            <person name="Wu H.M."/>
            <person name="Cheng K.H."/>
            <person name="Sunny Sun H."/>
        </authorList>
    </citation>
    <scope>INVOLVEMENT IN PFMC</scope>
</reference>
<reference key="15">
    <citation type="journal article" date="2012" name="J. Neurochem.">
        <title>Role of glycosphingolipids in the function of human serotonin(1)A receptors.</title>
        <authorList>
            <person name="Singh P."/>
            <person name="Paila Y.D."/>
            <person name="Chattopadhyay A."/>
        </authorList>
    </citation>
    <scope>FUNCTION</scope>
    <scope>SUBCELLULAR LOCATION</scope>
</reference>
<reference key="16">
    <citation type="journal article" date="2013" name="J. Biol. Chem.">
        <title>Post-synaptic density-95 (PSD-95) binding capacity of G-protein-coupled receptor 30 (GPR30), an estrogen receptor that can be identified in hippocampal dendritic spines.</title>
        <authorList>
            <person name="Akama K.T."/>
            <person name="Thompson L.I."/>
            <person name="Milner T.A."/>
            <person name="McEwen B.S."/>
        </authorList>
    </citation>
    <scope>SUBUNIT</scope>
</reference>
<reference key="17">
    <citation type="journal article" date="2022" name="Cell Discov.">
        <title>Structural insights into the ligand binding and Gi coupling of serotonin receptor 5-HT5A.</title>
        <authorList>
            <person name="Tan Y."/>
            <person name="Xu P."/>
            <person name="Huang S."/>
            <person name="Yang G."/>
            <person name="Zhou F."/>
            <person name="He X."/>
            <person name="Ma H."/>
            <person name="Xu H.E."/>
            <person name="Jiang Y."/>
        </authorList>
    </citation>
    <scope>FUNCTION</scope>
    <scope>MUTAGENESIS OF ALA-365</scope>
</reference>
<reference evidence="29 30 31" key="18">
    <citation type="journal article" date="2021" name="Nature">
        <title>Structural insights into the lipid and ligand regulation of serotonin receptors.</title>
        <authorList>
            <person name="Xu P."/>
            <person name="Huang S."/>
            <person name="Zhang H."/>
            <person name="Mao C."/>
            <person name="Zhou X.E."/>
            <person name="Cheng X."/>
            <person name="Simon I.A."/>
            <person name="Shen D.D."/>
            <person name="Yen H.Y."/>
            <person name="Robinson C.V."/>
            <person name="Harpsoee K."/>
            <person name="Svensson B."/>
            <person name="Guo J."/>
            <person name="Jiang H."/>
            <person name="Gloriam D.E."/>
            <person name="Melcher K."/>
            <person name="Jiang Y."/>
            <person name="Zhang Y."/>
            <person name="Xu H.E."/>
        </authorList>
    </citation>
    <scope>STRUCTURE BY ELECTRON MICROSCOPY (3.0 ANGSTROMS) OF 22-422 IN COMPLEX WITH SEROTONIN; GNB1; GNG2 AND GNAI1</scope>
    <scope>DISULFIDE BOND</scope>
    <scope>FUNCTION</scope>
    <scope>ACTIVITY REGULATION</scope>
    <scope>MUTAGENESIS OF ARG-134; LYS-345 AND LYS-405</scope>
</reference>
<reference evidence="34" key="19">
    <citation type="journal article" date="2023" name="Nature">
        <title>Recognition of methamphetamine and other amines by trace amine receptor TAAR1.</title>
        <authorList>
            <person name="Liu H."/>
            <person name="Zheng Y."/>
            <person name="Wang Y."/>
            <person name="Wang Y."/>
            <person name="He X."/>
            <person name="Xu P."/>
            <person name="Huang S."/>
            <person name="Yuan Q."/>
            <person name="Zhang X."/>
            <person name="Wang L."/>
            <person name="Jiang K."/>
            <person name="Chen H."/>
            <person name="Li Z."/>
            <person name="Liu W."/>
            <person name="Wang S."/>
            <person name="Xu H.E."/>
            <person name="Xu F."/>
        </authorList>
    </citation>
    <scope>STRUCTURE BY ELECTRON MICROSCOPY (2.6 ANGSTROMS) OF 22-422 IN COMPLEX WITH GNB1; GNG2 AND GNAI1</scope>
    <scope>DISULFIDE BOND</scope>
    <scope>FUNCTION</scope>
    <scope>ACTIVITY REGULATION</scope>
</reference>
<reference evidence="28" key="20">
    <citation type="journal article" date="2023" name="Nature">
        <title>Ligand recognition and G-protein coupling of trace amine receptor TAAR1.</title>
        <authorList>
            <person name="Xu Z."/>
            <person name="Guo L."/>
            <person name="Yu J."/>
            <person name="Shen S."/>
            <person name="Wu C."/>
            <person name="Zhang W."/>
            <person name="Zhao C."/>
            <person name="Deng Y."/>
            <person name="Tian X."/>
            <person name="Feng Y."/>
            <person name="Hou H."/>
            <person name="Su L."/>
            <person name="Wang H."/>
            <person name="Guo S."/>
            <person name="Wang H."/>
            <person name="Wang K."/>
            <person name="Chen P."/>
            <person name="Zhao J."/>
            <person name="Zhang X."/>
            <person name="Yong X."/>
            <person name="Cheng L."/>
            <person name="Liu L."/>
            <person name="Yang S."/>
            <person name="Yang F."/>
            <person name="Wang X."/>
            <person name="Yu X."/>
            <person name="Xu Y."/>
            <person name="Sun J.P."/>
            <person name="Yan W."/>
            <person name="Shao Z."/>
        </authorList>
    </citation>
    <scope>STRUCTURE BY ELECTRON MICROSCOPY (3.65 ANGSTROMS) OF 35-415 IN COMPLEX WITH GNB1; GNG2 AND GNAI1</scope>
    <scope>FUNCTION</scope>
    <scope>ACTIVITY REGULATION</scope>
    <scope>DISULFIDE BOND</scope>
    <scope>MUTAGENESIS OF LYS-191</scope>
</reference>
<reference evidence="33" key="21">
    <citation type="journal article" date="2024" name="Cell">
        <title>Flexible scaffold-based cheminformatics approach for polypharmacological drug design.</title>
        <authorList>
            <person name="Chen Z."/>
            <person name="Yu J."/>
            <person name="Wang H."/>
            <person name="Xu P."/>
            <person name="Fan L."/>
            <person name="Sun F."/>
            <person name="Huang S."/>
            <person name="Zhang P."/>
            <person name="Huang H."/>
            <person name="Gu S."/>
            <person name="Zhang B."/>
            <person name="Zhou Y."/>
            <person name="Wan X."/>
            <person name="Pei G."/>
            <person name="Xu H.E."/>
            <person name="Cheng J."/>
            <person name="Wang S."/>
        </authorList>
    </citation>
    <scope>STRUCTURE BY ELECTRON MICROSCOPY (3.0 ANGSTROMS) OF 22-422 IN COMPLEX WITH GNB1; GNG2 AND GNAI1</scope>
    <scope>FUNCTION</scope>
    <scope>ACTIVITY REGULATION</scope>
</reference>
<reference key="22">
    <citation type="journal article" date="1995" name="Biochem. Biophys. Res. Commun.">
        <title>Two naturally occurring amino acid substitutions in the human 5-HT1A receptor: glycine 22 to serine 22 and isoleucine 28 to valine 28.</title>
        <authorList>
            <person name="Nakhai B."/>
            <person name="Nielsen D.A."/>
            <person name="Linnoila M."/>
            <person name="Goldman D."/>
        </authorList>
    </citation>
    <scope>VARIANTS SER-22 AND VAL-28</scope>
</reference>
<reference key="23">
    <citation type="journal article" date="2015" name="Biochim. Biophys. Acta">
        <title>The zinc binding receptor GPR39 interacts with 5-HT1A and GalR1 to form dynamic heteroreceptor complexes with signaling diversity.</title>
        <authorList>
            <person name="Tena-Campos M."/>
            <person name="Ramon E."/>
            <person name="Borroto-Escuela D.O."/>
            <person name="Fuxe K."/>
            <person name="Garriga P."/>
        </authorList>
    </citation>
    <scope>SUBCELLULAR LOCATION</scope>
    <scope>INTERACTION WITH GRP39 AND GALR1</scope>
</reference>
<reference key="24">
    <citation type="journal article" date="1998" name="Am. J. Med. Genet.">
        <title>Novel mutations in the promoter and coding region of the human 5-HT1A receptor gene and association analysis in schizophrenia.</title>
        <authorList>
            <person name="Kawanishi Y."/>
            <person name="Harada S."/>
            <person name="Tachikawa H."/>
            <person name="Okubo T."/>
            <person name="Shiraishi H."/>
        </authorList>
    </citation>
    <scope>VARIANTS LEU-16 AND ASP-273</scope>
</reference>
<sequence>MDVLSPGQGNNTTSPPAPFETGGNTTGISDVTVSYQVITSLLLGTLIFCAVLGNACVVAAIALERSLQNVANYLIGSLAVTDLMVSVLVLPMAALYQVLNKWTLGQVTCDLFIALDVLCCTSSILHLCAIALDRYWAITDPIDYVNKRTPRRAAALISLTWLIGFLISIPPMLGWRTPEDRSDPDACTISKDHGYTIYSTFGAFYIPLLLMLVLYGRIFRAARFRIRKTVKKVEKTGADTRHGASPAPQPKKSVNGESGSRNWRLGVESKAGGALCANGAVRQGDDGAALEVIEVHRVGNSKEHLPLPSEAGPTPCAPASFERKNERNAEAKRKMALARERKTVKTLGIIMGTFILCWLPFFIVALVLPFCESSCHMPTLLGAIINWLGYSNSLLNPVIYAYFNKDFQNAFKKIIKCKFCRQ</sequence>